<protein>
    <recommendedName>
        <fullName evidence="1">Non-structural protein 5</fullName>
        <shortName evidence="1">NSP5</shortName>
    </recommendedName>
    <alternativeName>
        <fullName evidence="1">NS26</fullName>
    </alternativeName>
</protein>
<organism>
    <name type="scientific">Rotavirus A (strain RVA/Human/Japan/K8/1977/G1P3A[9])</name>
    <name type="common">RV-A</name>
    <dbReference type="NCBI Taxonomy" id="39012"/>
    <lineage>
        <taxon>Viruses</taxon>
        <taxon>Riboviria</taxon>
        <taxon>Orthornavirae</taxon>
        <taxon>Duplornaviricota</taxon>
        <taxon>Resentoviricetes</taxon>
        <taxon>Reovirales</taxon>
        <taxon>Sedoreoviridae</taxon>
        <taxon>Rotavirus</taxon>
        <taxon>Rotavirus A</taxon>
    </lineage>
</organism>
<reference key="1">
    <citation type="journal article" date="1998" name="J. Med. Virol.">
        <title>Serological and genomic characterization of human rotaviruses detected in China.</title>
        <authorList>
            <person name="Wu H."/>
            <person name="Taniguchi K."/>
            <person name="Urasawa T."/>
            <person name="Urasawa S."/>
        </authorList>
    </citation>
    <scope>NUCLEOTIDE SEQUENCE [MRNA]</scope>
</reference>
<sequence length="198" mass="21721">MSLSIDVTSLPSISSSIYKNESSSTTSTLSGKSIGRSEQYISPDAEAFSKYMLSKSPEDIGPSDSASNDPLTSFSNRSNAVKTNADAGVSMDSSTQSRPSSNVGCDQVDFSFNKGIKVSANLDSSVSISTNVKKEKSKNDHRSRKHYPKIEAESDSDDYVLDDSDSDDGKCKNCKYKRKYFALRMRMKRVAMQLIEDL</sequence>
<comment type="function">
    <text evidence="1">Plays an essential role in the viral genome replication. Participates, together with NSP2, in the formation of viral factories (viroplasms), which are large inclusions in the host cytoplasm where replication intermediates are assembled and viral RNA replication takes place. Orchestrates the recruitment of viroplasmic proteins such as capsid proteins to these factories. Participates in the selective exclusion of host proteins from stress granules (SG) and P bodies (PB). Also participates in the sequestration of these remodeled organelles in viral factories.</text>
</comment>
<comment type="cofactor">
    <cofactor evidence="1">
        <name>Mg(2+)</name>
        <dbReference type="ChEBI" id="CHEBI:18420"/>
    </cofactor>
</comment>
<comment type="subunit">
    <text evidence="1">Homodimer. Interacts with VP1. Interacts with VP2. Interacts with NSP2; this interaction leads to up-regulation of NSP5 hyperphosphorylation and formation of virus factories. Interacts with NSP6. Participates in the selective exclusion of host proteins from stress granules (SG) and P bodies (PB). Also participates in the sequestration of these remodeled organelles in viral factories.</text>
</comment>
<comment type="subcellular location">
    <subcellularLocation>
        <location evidence="1">Host cytoplasm</location>
    </subcellularLocation>
    <text evidence="1">Found in spherical cytoplasmic structures, called virus factories, that appear early after infection and are the site of viral replication and packaging.</text>
</comment>
<comment type="PTM">
    <text evidence="1">O-glycosylated.</text>
</comment>
<comment type="PTM">
    <text evidence="1">Hyperphosphorylated on serine residues, when in dimeric form. Phosphorylation by host CK1 is required for the hyperphosphorylation of NSP5 dimer.</text>
</comment>
<comment type="similarity">
    <text evidence="1">Belongs to the rotavirus NSP5 family.</text>
</comment>
<keyword id="KW-0325">Glycoprotein</keyword>
<keyword id="KW-1035">Host cytoplasm</keyword>
<keyword id="KW-0460">Magnesium</keyword>
<keyword id="KW-0479">Metal-binding</keyword>
<keyword id="KW-0547">Nucleotide-binding</keyword>
<keyword id="KW-0597">Phosphoprotein</keyword>
<keyword id="KW-0694">RNA-binding</keyword>
<feature type="chain" id="PRO_0000369500" description="Non-structural protein 5">
    <location>
        <begin position="1"/>
        <end position="198"/>
    </location>
</feature>
<feature type="region of interest" description="Disordered" evidence="2">
    <location>
        <begin position="16"/>
        <end position="37"/>
    </location>
</feature>
<feature type="region of interest" description="Disordered" evidence="2">
    <location>
        <begin position="53"/>
        <end position="104"/>
    </location>
</feature>
<feature type="region of interest" description="Disordered" evidence="2">
    <location>
        <begin position="127"/>
        <end position="167"/>
    </location>
</feature>
<feature type="compositionally biased region" description="Low complexity" evidence="2">
    <location>
        <begin position="16"/>
        <end position="30"/>
    </location>
</feature>
<feature type="compositionally biased region" description="Polar residues" evidence="2">
    <location>
        <begin position="64"/>
        <end position="82"/>
    </location>
</feature>
<feature type="compositionally biased region" description="Polar residues" evidence="2">
    <location>
        <begin position="91"/>
        <end position="104"/>
    </location>
</feature>
<feature type="compositionally biased region" description="Acidic residues" evidence="2">
    <location>
        <begin position="153"/>
        <end position="166"/>
    </location>
</feature>
<feature type="binding site" evidence="1">
    <location>
        <position position="92"/>
    </location>
    <ligand>
        <name>Mg(2+)</name>
        <dbReference type="ChEBI" id="CHEBI:18420"/>
    </ligand>
</feature>
<feature type="modified residue" description="Phosphoserine; by host CK1" evidence="1">
    <location>
        <position position="67"/>
    </location>
</feature>
<feature type="modified residue" description="Phosphoserine; by host" evidence="1">
    <location>
        <position position="154"/>
    </location>
</feature>
<feature type="modified residue" description="Phosphoserine; by host" evidence="1">
    <location>
        <position position="156"/>
    </location>
</feature>
<feature type="modified residue" description="Phosphoserine; by host" evidence="1">
    <location>
        <position position="164"/>
    </location>
</feature>
<feature type="modified residue" description="Phosphoserine; by host" evidence="1">
    <location>
        <position position="166"/>
    </location>
</feature>
<accession>Q8V9C4</accession>
<name>NSP5_ROTHJ</name>
<organismHost>
    <name type="scientific">Homo sapiens</name>
    <name type="common">Human</name>
    <dbReference type="NCBI Taxonomy" id="9606"/>
</organismHost>
<dbReference type="EMBL" id="AB008655">
    <property type="protein sequence ID" value="BAB83812.1"/>
    <property type="molecule type" value="mRNA"/>
</dbReference>
<dbReference type="SMR" id="Q8V9C4"/>
<dbReference type="GO" id="GO:0030430">
    <property type="term" value="C:host cell cytoplasm"/>
    <property type="evidence" value="ECO:0007669"/>
    <property type="project" value="UniProtKB-SubCell"/>
</dbReference>
<dbReference type="GO" id="GO:0016887">
    <property type="term" value="F:ATP hydrolysis activity"/>
    <property type="evidence" value="ECO:0007669"/>
    <property type="project" value="UniProtKB-UniRule"/>
</dbReference>
<dbReference type="GO" id="GO:0000287">
    <property type="term" value="F:magnesium ion binding"/>
    <property type="evidence" value="ECO:0007669"/>
    <property type="project" value="UniProtKB-UniRule"/>
</dbReference>
<dbReference type="GO" id="GO:0000166">
    <property type="term" value="F:nucleotide binding"/>
    <property type="evidence" value="ECO:0007669"/>
    <property type="project" value="UniProtKB-UniRule"/>
</dbReference>
<dbReference type="GO" id="GO:0003723">
    <property type="term" value="F:RNA binding"/>
    <property type="evidence" value="ECO:0007669"/>
    <property type="project" value="UniProtKB-UniRule"/>
</dbReference>
<dbReference type="GO" id="GO:0019079">
    <property type="term" value="P:viral genome replication"/>
    <property type="evidence" value="ECO:0007669"/>
    <property type="project" value="UniProtKB-UniRule"/>
</dbReference>
<dbReference type="HAMAP" id="MF_04092">
    <property type="entry name" value="ROTA_NSP5"/>
    <property type="match status" value="1"/>
</dbReference>
<dbReference type="InterPro" id="IPR002512">
    <property type="entry name" value="Rotavirus_A/C_NSP5"/>
</dbReference>
<dbReference type="Pfam" id="PF01525">
    <property type="entry name" value="Rota_NS26"/>
    <property type="match status" value="1"/>
</dbReference>
<dbReference type="PIRSF" id="PIRSF004006">
    <property type="entry name" value="Rota_NS26"/>
    <property type="match status" value="1"/>
</dbReference>
<evidence type="ECO:0000255" key="1">
    <source>
        <dbReference type="HAMAP-Rule" id="MF_04092"/>
    </source>
</evidence>
<evidence type="ECO:0000256" key="2">
    <source>
        <dbReference type="SAM" id="MobiDB-lite"/>
    </source>
</evidence>
<proteinExistence type="evidence at transcript level"/>